<gene>
    <name evidence="1" type="primary">thyX</name>
    <name type="ordered locus">TON_0437</name>
</gene>
<comment type="function">
    <text evidence="1">Catalyzes the reductive methylation of 2'-deoxyuridine-5'-monophosphate (dUMP) to 2'-deoxythymidine-5'-monophosphate (dTMP) while utilizing 5,10-methylenetetrahydrofolate (mTHF) as the methyl donor, and NADPH and FADH(2) as the reductant.</text>
</comment>
<comment type="catalytic activity">
    <reaction evidence="1">
        <text>dUMP + (6R)-5,10-methylene-5,6,7,8-tetrahydrofolate + NADPH + H(+) = dTMP + (6S)-5,6,7,8-tetrahydrofolate + NADP(+)</text>
        <dbReference type="Rhea" id="RHEA:29043"/>
        <dbReference type="ChEBI" id="CHEBI:15378"/>
        <dbReference type="ChEBI" id="CHEBI:15636"/>
        <dbReference type="ChEBI" id="CHEBI:57453"/>
        <dbReference type="ChEBI" id="CHEBI:57783"/>
        <dbReference type="ChEBI" id="CHEBI:58349"/>
        <dbReference type="ChEBI" id="CHEBI:63528"/>
        <dbReference type="ChEBI" id="CHEBI:246422"/>
        <dbReference type="EC" id="2.1.1.148"/>
    </reaction>
</comment>
<comment type="cofactor">
    <cofactor evidence="1">
        <name>FAD</name>
        <dbReference type="ChEBI" id="CHEBI:57692"/>
    </cofactor>
    <text evidence="1">Binds 4 FAD per tetramer. Each FAD binding site is formed by three monomers.</text>
</comment>
<comment type="pathway">
    <text evidence="1">Pyrimidine metabolism; dTTP biosynthesis.</text>
</comment>
<comment type="subunit">
    <text evidence="1">Homotetramer.</text>
</comment>
<comment type="similarity">
    <text evidence="1">Belongs to the thymidylate synthase ThyX family.</text>
</comment>
<feature type="chain" id="PRO_1000184605" description="Flavin-dependent thymidylate synthase">
    <location>
        <begin position="1"/>
        <end position="245"/>
    </location>
</feature>
<feature type="domain" description="ThyX" evidence="2">
    <location>
        <begin position="5"/>
        <end position="210"/>
    </location>
</feature>
<feature type="short sequence motif" description="ThyX motif" evidence="1">
    <location>
        <begin position="83"/>
        <end position="93"/>
    </location>
</feature>
<feature type="active site" description="Involved in ionization of N3 of dUMP, leading to its activation" evidence="1">
    <location>
        <position position="176"/>
    </location>
</feature>
<feature type="binding site" evidence="1">
    <location>
        <position position="59"/>
    </location>
    <ligand>
        <name>FAD</name>
        <dbReference type="ChEBI" id="CHEBI:57692"/>
        <note>ligand shared between neighboring subunits</note>
    </ligand>
</feature>
<feature type="binding site" evidence="1">
    <location>
        <begin position="80"/>
        <end position="83"/>
    </location>
    <ligand>
        <name>dUMP</name>
        <dbReference type="ChEBI" id="CHEBI:246422"/>
        <note>ligand shared between dimeric partners</note>
    </ligand>
</feature>
<feature type="binding site" evidence="1">
    <location>
        <begin position="83"/>
        <end position="85"/>
    </location>
    <ligand>
        <name>FAD</name>
        <dbReference type="ChEBI" id="CHEBI:57692"/>
        <note>ligand shared between neighboring subunits</note>
    </ligand>
</feature>
<feature type="binding site" description="in other chain" evidence="1">
    <location>
        <begin position="91"/>
        <end position="95"/>
    </location>
    <ligand>
        <name>dUMP</name>
        <dbReference type="ChEBI" id="CHEBI:246422"/>
        <note>ligand shared between dimeric partners</note>
    </ligand>
</feature>
<feature type="binding site" evidence="1">
    <location>
        <position position="91"/>
    </location>
    <ligand>
        <name>FAD</name>
        <dbReference type="ChEBI" id="CHEBI:57692"/>
        <note>ligand shared between neighboring subunits</note>
    </ligand>
</feature>
<feature type="binding site" description="in other chain" evidence="1">
    <location>
        <position position="149"/>
    </location>
    <ligand>
        <name>dUMP</name>
        <dbReference type="ChEBI" id="CHEBI:246422"/>
        <note>ligand shared between dimeric partners</note>
    </ligand>
</feature>
<feature type="binding site" evidence="1">
    <location>
        <begin position="165"/>
        <end position="167"/>
    </location>
    <ligand>
        <name>FAD</name>
        <dbReference type="ChEBI" id="CHEBI:57692"/>
        <note>ligand shared between neighboring subunits</note>
    </ligand>
</feature>
<feature type="binding site" evidence="1">
    <location>
        <position position="171"/>
    </location>
    <ligand>
        <name>FAD</name>
        <dbReference type="ChEBI" id="CHEBI:57692"/>
        <note>ligand shared between neighboring subunits</note>
    </ligand>
</feature>
<feature type="binding site" evidence="1">
    <location>
        <position position="176"/>
    </location>
    <ligand>
        <name>dUMP</name>
        <dbReference type="ChEBI" id="CHEBI:246422"/>
        <note>ligand shared between dimeric partners</note>
    </ligand>
</feature>
<sequence>MRDGIKVRLVNYTKKPLETVTWAALISYWDEWETEAFERLGEKDVEMHLPRILGYGHESILEHAVLTFAIEGCSRVCSHQLVRHRIASYTQQSMRYIKINPRDVEETFVIPESVKKNPELYEKWKKLMRETIQLYEETYKAGVHQEDARFILPQAVRTKIVVTMNLRELKHFLGLRACERAQWEIRDVAWKMLGEIAKNEELRPIIRWAKLGPRCVQLGYCPEGELMPPGCWKRTREKWKEVALG</sequence>
<name>THYX_THEON</name>
<reference key="1">
    <citation type="journal article" date="2008" name="J. Bacteriol.">
        <title>The complete genome sequence of Thermococcus onnurineus NA1 reveals a mixed heterotrophic and carboxydotrophic metabolism.</title>
        <authorList>
            <person name="Lee H.S."/>
            <person name="Kang S.G."/>
            <person name="Bae S.S."/>
            <person name="Lim J.K."/>
            <person name="Cho Y."/>
            <person name="Kim Y.J."/>
            <person name="Jeon J.H."/>
            <person name="Cha S.-S."/>
            <person name="Kwon K.K."/>
            <person name="Kim H.-T."/>
            <person name="Park C.-J."/>
            <person name="Lee H.-W."/>
            <person name="Kim S.I."/>
            <person name="Chun J."/>
            <person name="Colwell R.R."/>
            <person name="Kim S.-J."/>
            <person name="Lee J.-H."/>
        </authorList>
    </citation>
    <scope>NUCLEOTIDE SEQUENCE [LARGE SCALE GENOMIC DNA]</scope>
    <source>
        <strain>NA1</strain>
    </source>
</reference>
<proteinExistence type="inferred from homology"/>
<dbReference type="EC" id="2.1.1.148" evidence="1"/>
<dbReference type="EMBL" id="CP000855">
    <property type="protein sequence ID" value="ACJ15922.1"/>
    <property type="molecule type" value="Genomic_DNA"/>
</dbReference>
<dbReference type="RefSeq" id="WP_012571394.1">
    <property type="nucleotide sequence ID" value="NC_011529.1"/>
</dbReference>
<dbReference type="SMR" id="B6YTN5"/>
<dbReference type="STRING" id="523850.TON_0437"/>
<dbReference type="GeneID" id="7016732"/>
<dbReference type="KEGG" id="ton:TON_0437"/>
<dbReference type="PATRIC" id="fig|523850.10.peg.439"/>
<dbReference type="eggNOG" id="arCOG01883">
    <property type="taxonomic scope" value="Archaea"/>
</dbReference>
<dbReference type="HOGENOM" id="CLU_077585_0_0_2"/>
<dbReference type="OrthoDB" id="18918at2157"/>
<dbReference type="UniPathway" id="UPA00575"/>
<dbReference type="Proteomes" id="UP000002727">
    <property type="component" value="Chromosome"/>
</dbReference>
<dbReference type="GO" id="GO:0050660">
    <property type="term" value="F:flavin adenine dinucleotide binding"/>
    <property type="evidence" value="ECO:0007669"/>
    <property type="project" value="InterPro"/>
</dbReference>
<dbReference type="GO" id="GO:0070402">
    <property type="term" value="F:NADPH binding"/>
    <property type="evidence" value="ECO:0007669"/>
    <property type="project" value="TreeGrafter"/>
</dbReference>
<dbReference type="GO" id="GO:0050797">
    <property type="term" value="F:thymidylate synthase (FAD) activity"/>
    <property type="evidence" value="ECO:0007669"/>
    <property type="project" value="UniProtKB-UniRule"/>
</dbReference>
<dbReference type="GO" id="GO:0004799">
    <property type="term" value="F:thymidylate synthase activity"/>
    <property type="evidence" value="ECO:0007669"/>
    <property type="project" value="TreeGrafter"/>
</dbReference>
<dbReference type="GO" id="GO:0006231">
    <property type="term" value="P:dTMP biosynthetic process"/>
    <property type="evidence" value="ECO:0007669"/>
    <property type="project" value="UniProtKB-UniRule"/>
</dbReference>
<dbReference type="GO" id="GO:0006235">
    <property type="term" value="P:dTTP biosynthetic process"/>
    <property type="evidence" value="ECO:0007669"/>
    <property type="project" value="UniProtKB-UniRule"/>
</dbReference>
<dbReference type="GO" id="GO:0032259">
    <property type="term" value="P:methylation"/>
    <property type="evidence" value="ECO:0007669"/>
    <property type="project" value="UniProtKB-KW"/>
</dbReference>
<dbReference type="CDD" id="cd20175">
    <property type="entry name" value="ThyX"/>
    <property type="match status" value="1"/>
</dbReference>
<dbReference type="Gene3D" id="3.30.1360.170">
    <property type="match status" value="1"/>
</dbReference>
<dbReference type="HAMAP" id="MF_01408">
    <property type="entry name" value="ThyX"/>
    <property type="match status" value="1"/>
</dbReference>
<dbReference type="InterPro" id="IPR003669">
    <property type="entry name" value="Thymidylate_synthase_ThyX"/>
</dbReference>
<dbReference type="InterPro" id="IPR036098">
    <property type="entry name" value="Thymidylate_synthase_ThyX_sf"/>
</dbReference>
<dbReference type="NCBIfam" id="TIGR02170">
    <property type="entry name" value="thyX"/>
    <property type="match status" value="1"/>
</dbReference>
<dbReference type="PANTHER" id="PTHR34934">
    <property type="entry name" value="FLAVIN-DEPENDENT THYMIDYLATE SYNTHASE"/>
    <property type="match status" value="1"/>
</dbReference>
<dbReference type="PANTHER" id="PTHR34934:SF1">
    <property type="entry name" value="FLAVIN-DEPENDENT THYMIDYLATE SYNTHASE"/>
    <property type="match status" value="1"/>
</dbReference>
<dbReference type="Pfam" id="PF02511">
    <property type="entry name" value="Thy1"/>
    <property type="match status" value="1"/>
</dbReference>
<dbReference type="SUPFAM" id="SSF69796">
    <property type="entry name" value="Thymidylate synthase-complementing protein Thy1"/>
    <property type="match status" value="1"/>
</dbReference>
<dbReference type="PROSITE" id="PS51331">
    <property type="entry name" value="THYX"/>
    <property type="match status" value="1"/>
</dbReference>
<evidence type="ECO:0000255" key="1">
    <source>
        <dbReference type="HAMAP-Rule" id="MF_01408"/>
    </source>
</evidence>
<evidence type="ECO:0000255" key="2">
    <source>
        <dbReference type="PROSITE-ProRule" id="PRU00661"/>
    </source>
</evidence>
<keyword id="KW-0274">FAD</keyword>
<keyword id="KW-0285">Flavoprotein</keyword>
<keyword id="KW-0489">Methyltransferase</keyword>
<keyword id="KW-0521">NADP</keyword>
<keyword id="KW-0545">Nucleotide biosynthesis</keyword>
<keyword id="KW-0808">Transferase</keyword>
<protein>
    <recommendedName>
        <fullName evidence="1">Flavin-dependent thymidylate synthase</fullName>
        <shortName evidence="1">FDTS</shortName>
        <ecNumber evidence="1">2.1.1.148</ecNumber>
    </recommendedName>
    <alternativeName>
        <fullName evidence="1">FAD-dependent thymidylate synthase</fullName>
    </alternativeName>
    <alternativeName>
        <fullName evidence="1">Thymidylate synthase ThyX</fullName>
        <shortName evidence="1">TS</shortName>
        <shortName evidence="1">TSase</shortName>
    </alternativeName>
</protein>
<accession>B6YTN5</accession>
<organism>
    <name type="scientific">Thermococcus onnurineus (strain NA1)</name>
    <dbReference type="NCBI Taxonomy" id="523850"/>
    <lineage>
        <taxon>Archaea</taxon>
        <taxon>Methanobacteriati</taxon>
        <taxon>Methanobacteriota</taxon>
        <taxon>Thermococci</taxon>
        <taxon>Thermococcales</taxon>
        <taxon>Thermococcaceae</taxon>
        <taxon>Thermococcus</taxon>
    </lineage>
</organism>